<dbReference type="EMBL" id="CP000555">
    <property type="protein sequence ID" value="ABM94174.1"/>
    <property type="molecule type" value="Genomic_DNA"/>
</dbReference>
<dbReference type="RefSeq" id="WP_011828811.1">
    <property type="nucleotide sequence ID" value="NC_008825.1"/>
</dbReference>
<dbReference type="SMR" id="A2SF35"/>
<dbReference type="STRING" id="420662.Mpe_A1212"/>
<dbReference type="KEGG" id="mpt:Mpe_A1212"/>
<dbReference type="eggNOG" id="COG2332">
    <property type="taxonomic scope" value="Bacteria"/>
</dbReference>
<dbReference type="HOGENOM" id="CLU_079503_1_1_4"/>
<dbReference type="Proteomes" id="UP000000366">
    <property type="component" value="Chromosome"/>
</dbReference>
<dbReference type="GO" id="GO:0005886">
    <property type="term" value="C:plasma membrane"/>
    <property type="evidence" value="ECO:0007669"/>
    <property type="project" value="UniProtKB-SubCell"/>
</dbReference>
<dbReference type="GO" id="GO:0020037">
    <property type="term" value="F:heme binding"/>
    <property type="evidence" value="ECO:0007669"/>
    <property type="project" value="InterPro"/>
</dbReference>
<dbReference type="GO" id="GO:0046872">
    <property type="term" value="F:metal ion binding"/>
    <property type="evidence" value="ECO:0007669"/>
    <property type="project" value="UniProtKB-KW"/>
</dbReference>
<dbReference type="GO" id="GO:0017004">
    <property type="term" value="P:cytochrome complex assembly"/>
    <property type="evidence" value="ECO:0007669"/>
    <property type="project" value="UniProtKB-KW"/>
</dbReference>
<dbReference type="FunFam" id="2.40.50.140:FF:000104">
    <property type="entry name" value="Cytochrome c-type biogenesis protein CcmE"/>
    <property type="match status" value="1"/>
</dbReference>
<dbReference type="Gene3D" id="2.40.50.140">
    <property type="entry name" value="Nucleic acid-binding proteins"/>
    <property type="match status" value="1"/>
</dbReference>
<dbReference type="HAMAP" id="MF_01959">
    <property type="entry name" value="CcmE"/>
    <property type="match status" value="1"/>
</dbReference>
<dbReference type="InterPro" id="IPR004329">
    <property type="entry name" value="CcmE"/>
</dbReference>
<dbReference type="InterPro" id="IPR036127">
    <property type="entry name" value="CcmE-like_sf"/>
</dbReference>
<dbReference type="InterPro" id="IPR012340">
    <property type="entry name" value="NA-bd_OB-fold"/>
</dbReference>
<dbReference type="NCBIfam" id="NF009727">
    <property type="entry name" value="PRK13254.1-1"/>
    <property type="match status" value="1"/>
</dbReference>
<dbReference type="NCBIfam" id="NF009729">
    <property type="entry name" value="PRK13254.1-3"/>
    <property type="match status" value="1"/>
</dbReference>
<dbReference type="NCBIfam" id="NF009731">
    <property type="entry name" value="PRK13254.1-5"/>
    <property type="match status" value="1"/>
</dbReference>
<dbReference type="PANTHER" id="PTHR34128">
    <property type="entry name" value="CYTOCHROME C-TYPE BIOGENESIS PROTEIN CCME HOMOLOG, MITOCHONDRIAL"/>
    <property type="match status" value="1"/>
</dbReference>
<dbReference type="PANTHER" id="PTHR34128:SF2">
    <property type="entry name" value="CYTOCHROME C-TYPE BIOGENESIS PROTEIN CCME HOMOLOG, MITOCHONDRIAL"/>
    <property type="match status" value="1"/>
</dbReference>
<dbReference type="Pfam" id="PF03100">
    <property type="entry name" value="CcmE"/>
    <property type="match status" value="1"/>
</dbReference>
<dbReference type="SUPFAM" id="SSF82093">
    <property type="entry name" value="Heme chaperone CcmE"/>
    <property type="match status" value="1"/>
</dbReference>
<proteinExistence type="inferred from homology"/>
<sequence>MKPRQKRLVLIVGIVAAVGVAAALVLNAFQSNLVFFYSPAQVAAKEAPVGRAFRLGGLVDGGSVQRDGLVVRFVVTDTVKSIPVRYQGILPDLFKEGKGVVAQGQLGDDGVFVAREVLAKHDENYMPPEAAEALQRAGASNQKLGETVVKETRP</sequence>
<name>CCME_METPP</name>
<protein>
    <recommendedName>
        <fullName evidence="1">Cytochrome c-type biogenesis protein CcmE</fullName>
    </recommendedName>
    <alternativeName>
        <fullName evidence="1">Cytochrome c maturation protein E</fullName>
    </alternativeName>
    <alternativeName>
        <fullName evidence="1">Heme chaperone CcmE</fullName>
    </alternativeName>
</protein>
<evidence type="ECO:0000255" key="1">
    <source>
        <dbReference type="HAMAP-Rule" id="MF_01959"/>
    </source>
</evidence>
<evidence type="ECO:0000256" key="2">
    <source>
        <dbReference type="SAM" id="MobiDB-lite"/>
    </source>
</evidence>
<keyword id="KW-0997">Cell inner membrane</keyword>
<keyword id="KW-1003">Cell membrane</keyword>
<keyword id="KW-0201">Cytochrome c-type biogenesis</keyword>
<keyword id="KW-0349">Heme</keyword>
<keyword id="KW-0408">Iron</keyword>
<keyword id="KW-0472">Membrane</keyword>
<keyword id="KW-0479">Metal-binding</keyword>
<keyword id="KW-1185">Reference proteome</keyword>
<keyword id="KW-0735">Signal-anchor</keyword>
<keyword id="KW-0812">Transmembrane</keyword>
<keyword id="KW-1133">Transmembrane helix</keyword>
<gene>
    <name evidence="1" type="primary">ccmE</name>
    <name evidence="1" type="synonym">cycJ</name>
    <name type="ordered locus">Mpe_A1212</name>
</gene>
<organism>
    <name type="scientific">Methylibium petroleiphilum (strain ATCC BAA-1232 / LMG 22953 / PM1)</name>
    <dbReference type="NCBI Taxonomy" id="420662"/>
    <lineage>
        <taxon>Bacteria</taxon>
        <taxon>Pseudomonadati</taxon>
        <taxon>Pseudomonadota</taxon>
        <taxon>Betaproteobacteria</taxon>
        <taxon>Burkholderiales</taxon>
        <taxon>Sphaerotilaceae</taxon>
        <taxon>Methylibium</taxon>
    </lineage>
</organism>
<reference key="1">
    <citation type="journal article" date="2007" name="J. Bacteriol.">
        <title>Whole-genome analysis of the methyl tert-butyl ether-degrading beta-proteobacterium Methylibium petroleiphilum PM1.</title>
        <authorList>
            <person name="Kane S.R."/>
            <person name="Chakicherla A.Y."/>
            <person name="Chain P.S.G."/>
            <person name="Schmidt R."/>
            <person name="Shin M.W."/>
            <person name="Legler T.C."/>
            <person name="Scow K.M."/>
            <person name="Larimer F.W."/>
            <person name="Lucas S.M."/>
            <person name="Richardson P.M."/>
            <person name="Hristova K.R."/>
        </authorList>
    </citation>
    <scope>NUCLEOTIDE SEQUENCE [LARGE SCALE GENOMIC DNA]</scope>
    <source>
        <strain>ATCC BAA-1232 / LMG 22953 / PM1</strain>
    </source>
</reference>
<feature type="chain" id="PRO_1000070824" description="Cytochrome c-type biogenesis protein CcmE">
    <location>
        <begin position="1"/>
        <end position="154"/>
    </location>
</feature>
<feature type="topological domain" description="Cytoplasmic" evidence="1">
    <location>
        <begin position="1"/>
        <end position="7"/>
    </location>
</feature>
<feature type="transmembrane region" description="Helical; Signal-anchor for type II membrane protein" evidence="1">
    <location>
        <begin position="8"/>
        <end position="28"/>
    </location>
</feature>
<feature type="topological domain" description="Periplasmic" evidence="1">
    <location>
        <begin position="29"/>
        <end position="154"/>
    </location>
</feature>
<feature type="region of interest" description="Disordered" evidence="2">
    <location>
        <begin position="131"/>
        <end position="154"/>
    </location>
</feature>
<feature type="binding site" description="covalent" evidence="1">
    <location>
        <position position="121"/>
    </location>
    <ligand>
        <name>heme</name>
        <dbReference type="ChEBI" id="CHEBI:30413"/>
    </ligand>
</feature>
<feature type="binding site" description="axial binding residue" evidence="1">
    <location>
        <position position="125"/>
    </location>
    <ligand>
        <name>heme</name>
        <dbReference type="ChEBI" id="CHEBI:30413"/>
    </ligand>
    <ligandPart>
        <name>Fe</name>
        <dbReference type="ChEBI" id="CHEBI:18248"/>
    </ligandPart>
</feature>
<comment type="function">
    <text evidence="1">Heme chaperone required for the biogenesis of c-type cytochromes. Transiently binds heme delivered by CcmC and transfers the heme to apo-cytochromes in a process facilitated by CcmF and CcmH.</text>
</comment>
<comment type="subcellular location">
    <subcellularLocation>
        <location evidence="1">Cell inner membrane</location>
        <topology evidence="1">Single-pass type II membrane protein</topology>
        <orientation evidence="1">Periplasmic side</orientation>
    </subcellularLocation>
</comment>
<comment type="similarity">
    <text evidence="1">Belongs to the CcmE/CycJ family.</text>
</comment>
<accession>A2SF35</accession>